<sequence length="122" mass="13135">MIQQETRLKVADNSGAREVLTIKVLGGSGRKTANIGDVIVCTVKNATPGGVVKKGDVVKAVIVRTKSGVRRNDGSYIKFDENACVIIRDDKGPRGTRIFGPVARELREGNFMKIVSLAPEVL</sequence>
<accession>A6QJ82</accession>
<dbReference type="EMBL" id="AP009351">
    <property type="protein sequence ID" value="BAF68414.1"/>
    <property type="molecule type" value="Genomic_DNA"/>
</dbReference>
<dbReference type="RefSeq" id="WP_000615921.1">
    <property type="nucleotide sequence ID" value="NZ_JBBIAE010000006.1"/>
</dbReference>
<dbReference type="SMR" id="A6QJ82"/>
<dbReference type="GeneID" id="98346552"/>
<dbReference type="KEGG" id="sae:NWMN_2142"/>
<dbReference type="HOGENOM" id="CLU_095071_2_1_9"/>
<dbReference type="Proteomes" id="UP000006386">
    <property type="component" value="Chromosome"/>
</dbReference>
<dbReference type="GO" id="GO:0022625">
    <property type="term" value="C:cytosolic large ribosomal subunit"/>
    <property type="evidence" value="ECO:0007669"/>
    <property type="project" value="TreeGrafter"/>
</dbReference>
<dbReference type="GO" id="GO:0070180">
    <property type="term" value="F:large ribosomal subunit rRNA binding"/>
    <property type="evidence" value="ECO:0007669"/>
    <property type="project" value="TreeGrafter"/>
</dbReference>
<dbReference type="GO" id="GO:0003735">
    <property type="term" value="F:structural constituent of ribosome"/>
    <property type="evidence" value="ECO:0007669"/>
    <property type="project" value="InterPro"/>
</dbReference>
<dbReference type="GO" id="GO:0006412">
    <property type="term" value="P:translation"/>
    <property type="evidence" value="ECO:0007669"/>
    <property type="project" value="UniProtKB-UniRule"/>
</dbReference>
<dbReference type="CDD" id="cd00337">
    <property type="entry name" value="Ribosomal_uL14"/>
    <property type="match status" value="1"/>
</dbReference>
<dbReference type="FunFam" id="2.40.150.20:FF:000001">
    <property type="entry name" value="50S ribosomal protein L14"/>
    <property type="match status" value="1"/>
</dbReference>
<dbReference type="Gene3D" id="2.40.150.20">
    <property type="entry name" value="Ribosomal protein L14"/>
    <property type="match status" value="1"/>
</dbReference>
<dbReference type="HAMAP" id="MF_01367">
    <property type="entry name" value="Ribosomal_uL14"/>
    <property type="match status" value="1"/>
</dbReference>
<dbReference type="InterPro" id="IPR000218">
    <property type="entry name" value="Ribosomal_uL14"/>
</dbReference>
<dbReference type="InterPro" id="IPR005745">
    <property type="entry name" value="Ribosomal_uL14_bac-type"/>
</dbReference>
<dbReference type="InterPro" id="IPR019972">
    <property type="entry name" value="Ribosomal_uL14_CS"/>
</dbReference>
<dbReference type="InterPro" id="IPR036853">
    <property type="entry name" value="Ribosomal_uL14_sf"/>
</dbReference>
<dbReference type="NCBIfam" id="TIGR01067">
    <property type="entry name" value="rplN_bact"/>
    <property type="match status" value="1"/>
</dbReference>
<dbReference type="PANTHER" id="PTHR11761">
    <property type="entry name" value="50S/60S RIBOSOMAL PROTEIN L14/L23"/>
    <property type="match status" value="1"/>
</dbReference>
<dbReference type="PANTHER" id="PTHR11761:SF3">
    <property type="entry name" value="LARGE RIBOSOMAL SUBUNIT PROTEIN UL14M"/>
    <property type="match status" value="1"/>
</dbReference>
<dbReference type="Pfam" id="PF00238">
    <property type="entry name" value="Ribosomal_L14"/>
    <property type="match status" value="1"/>
</dbReference>
<dbReference type="SMART" id="SM01374">
    <property type="entry name" value="Ribosomal_L14"/>
    <property type="match status" value="1"/>
</dbReference>
<dbReference type="SUPFAM" id="SSF50193">
    <property type="entry name" value="Ribosomal protein L14"/>
    <property type="match status" value="1"/>
</dbReference>
<dbReference type="PROSITE" id="PS00049">
    <property type="entry name" value="RIBOSOMAL_L14"/>
    <property type="match status" value="1"/>
</dbReference>
<gene>
    <name evidence="1" type="primary">rplN</name>
    <name type="ordered locus">NWMN_2142</name>
</gene>
<proteinExistence type="inferred from homology"/>
<evidence type="ECO:0000255" key="1">
    <source>
        <dbReference type="HAMAP-Rule" id="MF_01367"/>
    </source>
</evidence>
<evidence type="ECO:0000305" key="2"/>
<keyword id="KW-0687">Ribonucleoprotein</keyword>
<keyword id="KW-0689">Ribosomal protein</keyword>
<keyword id="KW-0694">RNA-binding</keyword>
<keyword id="KW-0699">rRNA-binding</keyword>
<comment type="function">
    <text evidence="1">Binds to 23S rRNA. Forms part of two intersubunit bridges in the 70S ribosome.</text>
</comment>
<comment type="subunit">
    <text evidence="1">Part of the 50S ribosomal subunit. Forms a cluster with proteins L3 and L19. In the 70S ribosome, L14 and L19 interact and together make contacts with the 16S rRNA in bridges B5 and B8.</text>
</comment>
<comment type="similarity">
    <text evidence="1">Belongs to the universal ribosomal protein uL14 family.</text>
</comment>
<name>RL14_STAAE</name>
<feature type="chain" id="PRO_1000073426" description="Large ribosomal subunit protein uL14">
    <location>
        <begin position="1"/>
        <end position="122"/>
    </location>
</feature>
<organism>
    <name type="scientific">Staphylococcus aureus (strain Newman)</name>
    <dbReference type="NCBI Taxonomy" id="426430"/>
    <lineage>
        <taxon>Bacteria</taxon>
        <taxon>Bacillati</taxon>
        <taxon>Bacillota</taxon>
        <taxon>Bacilli</taxon>
        <taxon>Bacillales</taxon>
        <taxon>Staphylococcaceae</taxon>
        <taxon>Staphylococcus</taxon>
    </lineage>
</organism>
<protein>
    <recommendedName>
        <fullName evidence="1">Large ribosomal subunit protein uL14</fullName>
    </recommendedName>
    <alternativeName>
        <fullName evidence="2">50S ribosomal protein L14</fullName>
    </alternativeName>
</protein>
<reference key="1">
    <citation type="journal article" date="2008" name="J. Bacteriol.">
        <title>Genome sequence of Staphylococcus aureus strain Newman and comparative analysis of staphylococcal genomes: polymorphism and evolution of two major pathogenicity islands.</title>
        <authorList>
            <person name="Baba T."/>
            <person name="Bae T."/>
            <person name="Schneewind O."/>
            <person name="Takeuchi F."/>
            <person name="Hiramatsu K."/>
        </authorList>
    </citation>
    <scope>NUCLEOTIDE SEQUENCE [LARGE SCALE GENOMIC DNA]</scope>
    <source>
        <strain>Newman</strain>
    </source>
</reference>